<proteinExistence type="inferred from homology"/>
<dbReference type="EMBL" id="CP000930">
    <property type="protein sequence ID" value="ABZ84683.1"/>
    <property type="molecule type" value="Genomic_DNA"/>
</dbReference>
<dbReference type="RefSeq" id="WP_012283183.1">
    <property type="nucleotide sequence ID" value="NC_010337.2"/>
</dbReference>
<dbReference type="SMR" id="B0TGS2"/>
<dbReference type="STRING" id="498761.HM1_2126"/>
<dbReference type="KEGG" id="hmo:HM1_2126"/>
<dbReference type="eggNOG" id="COG2052">
    <property type="taxonomic scope" value="Bacteria"/>
</dbReference>
<dbReference type="HOGENOM" id="CLU_165326_0_0_9"/>
<dbReference type="OrthoDB" id="5432174at2"/>
<dbReference type="Proteomes" id="UP000008550">
    <property type="component" value="Chromosome"/>
</dbReference>
<dbReference type="HAMAP" id="MF_01503">
    <property type="entry name" value="RemA"/>
    <property type="match status" value="1"/>
</dbReference>
<dbReference type="InterPro" id="IPR007169">
    <property type="entry name" value="RemA-like"/>
</dbReference>
<dbReference type="NCBIfam" id="NF046064">
    <property type="entry name" value="MtxBflmRegRemA"/>
    <property type="match status" value="1"/>
</dbReference>
<dbReference type="NCBIfam" id="NF003315">
    <property type="entry name" value="PRK04323.1"/>
    <property type="match status" value="1"/>
</dbReference>
<dbReference type="PANTHER" id="PTHR38449:SF1">
    <property type="entry name" value="REGULATORY PROTEIN SSL2874-RELATED"/>
    <property type="match status" value="1"/>
</dbReference>
<dbReference type="PANTHER" id="PTHR38449">
    <property type="entry name" value="REGULATORY PROTEIN TM_1690-RELATED"/>
    <property type="match status" value="1"/>
</dbReference>
<dbReference type="Pfam" id="PF04025">
    <property type="entry name" value="RemA-like"/>
    <property type="match status" value="1"/>
</dbReference>
<name>Y2058_HELMI</name>
<feature type="chain" id="PRO_1000198221" description="Putative regulatory protein Helmi_20580">
    <location>
        <begin position="1"/>
        <end position="91"/>
    </location>
</feature>
<evidence type="ECO:0000255" key="1">
    <source>
        <dbReference type="HAMAP-Rule" id="MF_01503"/>
    </source>
</evidence>
<organism>
    <name type="scientific">Heliobacterium modesticaldum (strain ATCC 51547 / Ice1)</name>
    <dbReference type="NCBI Taxonomy" id="498761"/>
    <lineage>
        <taxon>Bacteria</taxon>
        <taxon>Bacillati</taxon>
        <taxon>Bacillota</taxon>
        <taxon>Clostridia</taxon>
        <taxon>Eubacteriales</taxon>
        <taxon>Heliobacteriaceae</taxon>
        <taxon>Heliomicrobium</taxon>
    </lineage>
</organism>
<accession>B0TGS2</accession>
<keyword id="KW-1185">Reference proteome</keyword>
<comment type="similarity">
    <text evidence="1">Belongs to the RemA family.</text>
</comment>
<gene>
    <name type="ordered locus">Helmi_20580</name>
    <name type="ORF">HM1_2126</name>
</gene>
<protein>
    <recommendedName>
        <fullName evidence="1">Putative regulatory protein Helmi_20580</fullName>
    </recommendedName>
</protein>
<reference key="1">
    <citation type="journal article" date="2008" name="J. Bacteriol.">
        <title>The genome of Heliobacterium modesticaldum, a phototrophic representative of the Firmicutes containing the simplest photosynthetic apparatus.</title>
        <authorList>
            <person name="Sattley W.M."/>
            <person name="Madigan M.T."/>
            <person name="Swingley W.D."/>
            <person name="Cheung P.C."/>
            <person name="Clocksin K.M."/>
            <person name="Conrad A.L."/>
            <person name="Dejesa L.C."/>
            <person name="Honchak B.M."/>
            <person name="Jung D.O."/>
            <person name="Karbach L.E."/>
            <person name="Kurdoglu A."/>
            <person name="Lahiri S."/>
            <person name="Mastrian S.D."/>
            <person name="Page L.E."/>
            <person name="Taylor H.L."/>
            <person name="Wang Z.T."/>
            <person name="Raymond J."/>
            <person name="Chen M."/>
            <person name="Blankenship R.E."/>
            <person name="Touchman J.W."/>
        </authorList>
    </citation>
    <scope>NUCLEOTIDE SEQUENCE [LARGE SCALE GENOMIC DNA]</scope>
    <source>
        <strain>ATCC 51547 / Ice1</strain>
    </source>
</reference>
<sequence>MDIKLINIGFGNIVSASRIVAIVSPESAPIKRIIQEARDRGMLIDATYGRRTRAVIITDSDHVILSAVQPETVAHRLSAKESVHHGDEATE</sequence>